<sequence length="641" mass="69571">MVAVVQADYSRAEALAAWTRLSDEFIGNCYVSVRPRHAPAWEVVVASAAGSLRLEAFKRAHDHDFLDRLAVAIGNWEQKAQRPDHEIAQMLDQVGDYGLMQGMTNPDKGFMHADILLPLLQARDACAIVVRTEPVFQQLGTAFLVRPDLILTAAHVVMDVDAATGRWASTLKNGLAFHFREKPNQREHPTLAIRPAAVALISHALPHGRPPNLLERSLAAPADTCLDYALIRLAQRVSHLRPVEVVDTAAVKQGKPCWAFGFPGGNALMMDVDLVTDIDPGSGRWLHRANVAAGMSGGCCINHEGQVAGLHEGTLDSEDDAKVKRNRGISIAAIRRDQCRDGKDPLKQVASSPSLEFRDPALVDGWYRAGTALAGEAGAAQWRASVEAALRGRNPDATDSLPAYHPWFARADVEKWIDSAAPDERLSLIHGPPGVGKSFCIHLLRGKLDPYADLVVFNPTQTNDMTWSDATGHAAAANASDYRTAAASVRYRAIDDFLGELRDRSAGGTRTCYVAIDFGPAGRQDRFVGTNWVELIAILAAAGWIRVMLIGLDDYERSVMIDRMESRPETDSVKIAESELAPITAAEFRTYAKHLASARGKPAPKQAEMAKYVDSAVVGVAEPMKMVAAVRAAIELEAALS</sequence>
<dbReference type="EC" id="3.4.21.-" evidence="5"/>
<dbReference type="EMBL" id="CP013140">
    <property type="protein sequence ID" value="ALN60086.1"/>
    <property type="molecule type" value="Genomic_DNA"/>
</dbReference>
<dbReference type="EMBL" id="CP040656">
    <property type="protein sequence ID" value="QCW28097.1"/>
    <property type="molecule type" value="Genomic_DNA"/>
</dbReference>
<dbReference type="PDB" id="8SRZ">
    <property type="method" value="X-ray"/>
    <property type="resolution" value="1.25 A"/>
    <property type="chains" value="A/B=5-95"/>
</dbReference>
<dbReference type="PDB" id="9FRR">
    <property type="method" value="X-ray"/>
    <property type="resolution" value="1.60 A"/>
    <property type="chains" value="A/B=4-98"/>
</dbReference>
<dbReference type="PDBsum" id="8SRZ"/>
<dbReference type="PDBsum" id="9FRR"/>
<dbReference type="SMR" id="A0A0S2DN74"/>
<dbReference type="STRING" id="69.GLE_4745"/>
<dbReference type="KEGG" id="lez:GLE_4745"/>
<dbReference type="PATRIC" id="fig|69.6.peg.4679"/>
<dbReference type="OrthoDB" id="513782at2"/>
<dbReference type="Proteomes" id="UP000061569">
    <property type="component" value="Chromosome"/>
</dbReference>
<dbReference type="GO" id="GO:0005886">
    <property type="term" value="C:plasma membrane"/>
    <property type="evidence" value="ECO:0007669"/>
    <property type="project" value="UniProtKB-SubCell"/>
</dbReference>
<dbReference type="GO" id="GO:0008236">
    <property type="term" value="F:serine-type peptidase activity"/>
    <property type="evidence" value="ECO:0007669"/>
    <property type="project" value="UniProtKB-KW"/>
</dbReference>
<dbReference type="GO" id="GO:0051607">
    <property type="term" value="P:defense response to virus"/>
    <property type="evidence" value="ECO:0007669"/>
    <property type="project" value="UniProtKB-KW"/>
</dbReference>
<dbReference type="GO" id="GO:0006508">
    <property type="term" value="P:proteolysis"/>
    <property type="evidence" value="ECO:0007669"/>
    <property type="project" value="UniProtKB-KW"/>
</dbReference>
<dbReference type="Gene3D" id="2.40.10.10">
    <property type="entry name" value="Trypsin-like serine proteases"/>
    <property type="match status" value="2"/>
</dbReference>
<dbReference type="InterPro" id="IPR027417">
    <property type="entry name" value="P-loop_NTPase"/>
</dbReference>
<dbReference type="InterPro" id="IPR009003">
    <property type="entry name" value="Peptidase_S1_PA"/>
</dbReference>
<dbReference type="InterPro" id="IPR043504">
    <property type="entry name" value="Peptidase_S1_PA_chymotrypsin"/>
</dbReference>
<dbReference type="Pfam" id="PF13365">
    <property type="entry name" value="Trypsin_2"/>
    <property type="match status" value="1"/>
</dbReference>
<dbReference type="SUPFAM" id="SSF52540">
    <property type="entry name" value="P-loop containing nucleoside triphosphate hydrolases"/>
    <property type="match status" value="1"/>
</dbReference>
<dbReference type="SUPFAM" id="SSF50494">
    <property type="entry name" value="Trypsin-like serine proteases"/>
    <property type="match status" value="1"/>
</dbReference>
<gene>
    <name evidence="7" type="ORF">FE772_23065</name>
    <name evidence="3" type="ORF">Ga0399710_4915</name>
    <name evidence="6" type="ORF">GLE_4745</name>
</gene>
<comment type="function">
    <text evidence="2">Possibly a dedicated protease for substrate gasdermin bGSDM; cleaves the bGSDM precursor, releasing the pore-forming moiety, which integrates into the membrane and triggers cell death. Involved in defense against bacteriophages. When this probable 4 gene operon (bGSDM-FE772_23060-FE772_23065-FE772_23070) is inserted into E.coli it provides nearly 100-fold protection against phages T5 and T6 and about 8-fold against phage T4. The operon without bGSDM no longer protects against phage.</text>
</comment>
<comment type="subcellular location">
    <subcellularLocation>
        <location evidence="4">Cell inner membrane</location>
        <topology evidence="1">Single-pass membrane protein</topology>
    </subcellularLocation>
</comment>
<comment type="similarity">
    <text evidence="4">Belongs to the peptidase S1 family.</text>
</comment>
<evidence type="ECO:0000255" key="1"/>
<evidence type="ECO:0000269" key="2">
    <source>
    </source>
</evidence>
<evidence type="ECO:0000303" key="3">
    <source>
    </source>
</evidence>
<evidence type="ECO:0000305" key="4"/>
<evidence type="ECO:0000305" key="5">
    <source>
    </source>
</evidence>
<evidence type="ECO:0000312" key="6">
    <source>
        <dbReference type="EMBL" id="ALN60086.1"/>
    </source>
</evidence>
<evidence type="ECO:0000312" key="7">
    <source>
        <dbReference type="EMBL" id="QCW28097.1"/>
    </source>
</evidence>
<evidence type="ECO:0000312" key="8">
    <source>
        <dbReference type="Proteomes" id="UP000061569"/>
    </source>
</evidence>
<evidence type="ECO:0007829" key="9">
    <source>
        <dbReference type="PDB" id="8SRZ"/>
    </source>
</evidence>
<name>PROT2_LYSEN</name>
<proteinExistence type="evidence at protein level"/>
<organism>
    <name type="scientific">Lysobacter enzymogenes</name>
    <dbReference type="NCBI Taxonomy" id="69"/>
    <lineage>
        <taxon>Bacteria</taxon>
        <taxon>Pseudomonadati</taxon>
        <taxon>Pseudomonadota</taxon>
        <taxon>Gammaproteobacteria</taxon>
        <taxon>Lysobacterales</taxon>
        <taxon>Lysobacteraceae</taxon>
        <taxon>Lysobacter</taxon>
    </lineage>
</organism>
<accession>A0A0S2DN74</accession>
<protein>
    <recommendedName>
        <fullName evidence="4">Probable serine protease FE772_23065</fullName>
        <ecNumber evidence="5">3.4.21.-</ecNumber>
    </recommendedName>
    <alternativeName>
        <fullName evidence="3">Trypsin-like protease 2</fullName>
    </alternativeName>
</protein>
<keyword id="KW-0002">3D-structure</keyword>
<keyword id="KW-0051">Antiviral defense</keyword>
<keyword id="KW-0997">Cell inner membrane</keyword>
<keyword id="KW-1003">Cell membrane</keyword>
<keyword id="KW-0378">Hydrolase</keyword>
<keyword id="KW-0472">Membrane</keyword>
<keyword id="KW-0645">Protease</keyword>
<keyword id="KW-0720">Serine protease</keyword>
<keyword id="KW-0812">Transmembrane</keyword>
<keyword id="KW-1133">Transmembrane helix</keyword>
<reference evidence="6 8" key="1">
    <citation type="journal article" date="2015" name="BMC Genomics">
        <title>Comparative genomics and metabolic profiling of the genus Lysobacter.</title>
        <authorList>
            <person name="de Bruijn I."/>
            <person name="Cheng X."/>
            <person name="de Jager V."/>
            <person name="Exposito R.G."/>
            <person name="Watrous J."/>
            <person name="Patel N."/>
            <person name="Postma J."/>
            <person name="Dorrestein P.C."/>
            <person name="Kobayashi D."/>
            <person name="Raaijmakers J.M."/>
        </authorList>
    </citation>
    <scope>NUCLEOTIDE SEQUENCE [LARGE SCALE GENOMIC DNA]</scope>
    <source>
        <strain>C3</strain>
    </source>
</reference>
<reference evidence="7" key="2">
    <citation type="journal article" date="2019" name="Appl. Environ. Microbiol.">
        <title>Interspecies and Intraspecies Signals Synergistically Regulate Lysobacter enzymogenes Twitching Motility.</title>
        <authorList>
            <person name="Feng T."/>
            <person name="Han Y."/>
            <person name="Li B."/>
            <person name="Li Z."/>
            <person name="Yu Y."/>
            <person name="Sun Q."/>
            <person name="Li X."/>
            <person name="Du L."/>
            <person name="Zhang X.H."/>
            <person name="Wang Y."/>
        </authorList>
    </citation>
    <scope>NUCLEOTIDE SEQUENCE [LARGE SCALE GENOMIC DNA]</scope>
    <source>
        <strain>YC36</strain>
    </source>
</reference>
<reference key="3">
    <citation type="journal article" date="2022" name="Science">
        <title>Bacterial gasdermins reveal an ancient mechanism of cell death.</title>
        <authorList>
            <person name="Johnson A.G."/>
            <person name="Wein T."/>
            <person name="Mayer M.L."/>
            <person name="Duncan-Lowey B."/>
            <person name="Yirmiya E."/>
            <person name="Oppenheimer-Shaanan Y."/>
            <person name="Amitai G."/>
            <person name="Sorek R."/>
            <person name="Kranzusch P.J."/>
        </authorList>
    </citation>
    <scope>FUNCTION</scope>
    <scope>MUTAGENESIS OF SER-296</scope>
    <source>
        <strain>YC36</strain>
    </source>
</reference>
<feature type="chain" id="PRO_0000455585" description="Probable serine protease FE772_23065">
    <location>
        <begin position="1"/>
        <end position="641"/>
    </location>
</feature>
<feature type="transmembrane region" description="Helical" evidence="1">
    <location>
        <begin position="532"/>
        <end position="552"/>
    </location>
</feature>
<feature type="mutagenesis site" description="4-gene operon no longer protects against phage." evidence="2">
    <original>S</original>
    <variation>A</variation>
    <location>
        <position position="296"/>
    </location>
</feature>
<feature type="helix" evidence="9">
    <location>
        <begin position="10"/>
        <end position="16"/>
    </location>
</feature>
<feature type="helix" evidence="9">
    <location>
        <begin position="23"/>
        <end position="33"/>
    </location>
</feature>
<feature type="helix" evidence="9">
    <location>
        <begin position="41"/>
        <end position="47"/>
    </location>
</feature>
<feature type="helix" evidence="9">
    <location>
        <begin position="52"/>
        <end position="62"/>
    </location>
</feature>
<feature type="helix" evidence="9">
    <location>
        <begin position="66"/>
        <end position="79"/>
    </location>
</feature>
<feature type="helix" evidence="9">
    <location>
        <begin position="84"/>
        <end position="93"/>
    </location>
</feature>